<gene>
    <name type="primary">HSP26.5</name>
    <name type="ordered locus">At1g52560</name>
    <name type="ORF">F6D8.22</name>
</gene>
<sequence length="232" mass="26545">MALARLALRNLQQKLSPSLMGQSCERGLVGNRHNPMKLNRFMATSAGEQEDKMNTEVSVSEKKSPRQNFPRRRGRKSLWRNTDDHGYFTPTLNEFFPPTIGNTLIQATENMNRIFDNFNVNPFQLMGQVKEQDDCYKLRYEVPGLTKEDVKITVNDGILTIKGDHKAEEEKGSPEEDEYWSSKSYGYYNTSLSLPDDAKVEDIKAELKNGVLNLVIPRTEKPKKNVQEISVE</sequence>
<evidence type="ECO:0000255" key="1"/>
<evidence type="ECO:0000255" key="2">
    <source>
        <dbReference type="PROSITE-ProRule" id="PRU00285"/>
    </source>
</evidence>
<evidence type="ECO:0000256" key="3">
    <source>
        <dbReference type="SAM" id="MobiDB-lite"/>
    </source>
</evidence>
<evidence type="ECO:0000305" key="4"/>
<dbReference type="EMBL" id="AC008016">
    <property type="protein sequence ID" value="AAD55608.1"/>
    <property type="molecule type" value="Genomic_DNA"/>
</dbReference>
<dbReference type="EMBL" id="CP002684">
    <property type="protein sequence ID" value="AEE32822.1"/>
    <property type="molecule type" value="Genomic_DNA"/>
</dbReference>
<dbReference type="EMBL" id="CP002684">
    <property type="protein sequence ID" value="AEE32823.1"/>
    <property type="molecule type" value="Genomic_DNA"/>
</dbReference>
<dbReference type="EMBL" id="BT010839">
    <property type="protein sequence ID" value="AAR24206.1"/>
    <property type="molecule type" value="mRNA"/>
</dbReference>
<dbReference type="EMBL" id="BT011308">
    <property type="protein sequence ID" value="AAR92344.1"/>
    <property type="molecule type" value="mRNA"/>
</dbReference>
<dbReference type="PIR" id="C96566">
    <property type="entry name" value="C96566"/>
</dbReference>
<dbReference type="RefSeq" id="NP_001117476.1">
    <molecule id="Q9SSQ8-2"/>
    <property type="nucleotide sequence ID" value="NM_001124004.2"/>
</dbReference>
<dbReference type="RefSeq" id="NP_175665.1">
    <molecule id="Q9SSQ8-1"/>
    <property type="nucleotide sequence ID" value="NM_104134.4"/>
</dbReference>
<dbReference type="SMR" id="Q9SSQ8"/>
<dbReference type="BioGRID" id="26912">
    <property type="interactions" value="8"/>
</dbReference>
<dbReference type="FunCoup" id="Q9SSQ8">
    <property type="interactions" value="10"/>
</dbReference>
<dbReference type="IntAct" id="Q9SSQ8">
    <property type="interactions" value="7"/>
</dbReference>
<dbReference type="STRING" id="3702.Q9SSQ8"/>
<dbReference type="PaxDb" id="3702-AT1G52560.1"/>
<dbReference type="ProteomicsDB" id="230269">
    <molecule id="Q9SSQ8-1"/>
</dbReference>
<dbReference type="EnsemblPlants" id="AT1G52560.1">
    <molecule id="Q9SSQ8-1"/>
    <property type="protein sequence ID" value="AT1G52560.1"/>
    <property type="gene ID" value="AT1G52560"/>
</dbReference>
<dbReference type="EnsemblPlants" id="AT1G52560.2">
    <molecule id="Q9SSQ8-2"/>
    <property type="protein sequence ID" value="AT1G52560.2"/>
    <property type="gene ID" value="AT1G52560"/>
</dbReference>
<dbReference type="GeneID" id="841687"/>
<dbReference type="Gramene" id="AT1G52560.1">
    <molecule id="Q9SSQ8-1"/>
    <property type="protein sequence ID" value="AT1G52560.1"/>
    <property type="gene ID" value="AT1G52560"/>
</dbReference>
<dbReference type="Gramene" id="AT1G52560.2">
    <molecule id="Q9SSQ8-2"/>
    <property type="protein sequence ID" value="AT1G52560.2"/>
    <property type="gene ID" value="AT1G52560"/>
</dbReference>
<dbReference type="KEGG" id="ath:AT1G52560"/>
<dbReference type="Araport" id="AT1G52560"/>
<dbReference type="TAIR" id="AT1G52560">
    <property type="gene designation" value="HSP26.5"/>
</dbReference>
<dbReference type="eggNOG" id="KOG0710">
    <property type="taxonomic scope" value="Eukaryota"/>
</dbReference>
<dbReference type="InParanoid" id="Q9SSQ8"/>
<dbReference type="OMA" id="CEWWSAS"/>
<dbReference type="PhylomeDB" id="Q9SSQ8"/>
<dbReference type="PRO" id="PR:Q9SSQ8"/>
<dbReference type="Proteomes" id="UP000006548">
    <property type="component" value="Chromosome 1"/>
</dbReference>
<dbReference type="ExpressionAtlas" id="Q9SSQ8">
    <property type="expression patterns" value="baseline and differential"/>
</dbReference>
<dbReference type="GO" id="GO:0005739">
    <property type="term" value="C:mitochondrion"/>
    <property type="evidence" value="ECO:0007669"/>
    <property type="project" value="UniProtKB-SubCell"/>
</dbReference>
<dbReference type="GO" id="GO:0009408">
    <property type="term" value="P:response to heat"/>
    <property type="evidence" value="ECO:0007669"/>
    <property type="project" value="InterPro"/>
</dbReference>
<dbReference type="CDD" id="cd06464">
    <property type="entry name" value="ACD_sHsps-like"/>
    <property type="match status" value="1"/>
</dbReference>
<dbReference type="FunFam" id="2.60.40.790:FF:000059">
    <property type="entry name" value="26.5 kDa heat shock protein, mitochondrial"/>
    <property type="match status" value="1"/>
</dbReference>
<dbReference type="Gene3D" id="2.60.40.790">
    <property type="match status" value="1"/>
</dbReference>
<dbReference type="InterPro" id="IPR002068">
    <property type="entry name" value="A-crystallin/Hsp20_dom"/>
</dbReference>
<dbReference type="InterPro" id="IPR008978">
    <property type="entry name" value="HSP20-like_chaperone"/>
</dbReference>
<dbReference type="InterPro" id="IPR044587">
    <property type="entry name" value="HSP21-like"/>
</dbReference>
<dbReference type="PANTHER" id="PTHR46733">
    <property type="entry name" value="26.5 KDA HEAT SHOCK PROTEIN, MITOCHONDRIAL"/>
    <property type="match status" value="1"/>
</dbReference>
<dbReference type="PANTHER" id="PTHR46733:SF3">
    <property type="entry name" value="26.5 KDA HEAT SHOCK PROTEIN, MITOCHONDRIAL"/>
    <property type="match status" value="1"/>
</dbReference>
<dbReference type="Pfam" id="PF00011">
    <property type="entry name" value="HSP20"/>
    <property type="match status" value="1"/>
</dbReference>
<dbReference type="SUPFAM" id="SSF49764">
    <property type="entry name" value="HSP20-like chaperones"/>
    <property type="match status" value="1"/>
</dbReference>
<dbReference type="PROSITE" id="PS01031">
    <property type="entry name" value="SHSP"/>
    <property type="match status" value="1"/>
</dbReference>
<feature type="transit peptide" description="Mitochondrion" evidence="1">
    <location>
        <begin position="1"/>
        <end position="42"/>
    </location>
</feature>
<feature type="chain" id="PRO_0000387494" description="26.5 kDa heat shock protein, mitochondrial">
    <location>
        <begin position="43"/>
        <end position="232"/>
    </location>
</feature>
<feature type="domain" description="sHSP" evidence="2">
    <location>
        <begin position="114"/>
        <end position="232"/>
    </location>
</feature>
<feature type="region of interest" description="Disordered" evidence="3">
    <location>
        <begin position="44"/>
        <end position="82"/>
    </location>
</feature>
<feature type="compositionally biased region" description="Basic and acidic residues" evidence="3">
    <location>
        <begin position="49"/>
        <end position="64"/>
    </location>
</feature>
<feature type="compositionally biased region" description="Basic residues" evidence="3">
    <location>
        <begin position="69"/>
        <end position="78"/>
    </location>
</feature>
<feature type="splice variant" id="VSP_038274" description="In isoform 2." evidence="4">
    <location>
        <begin position="94"/>
        <end position="100"/>
    </location>
</feature>
<keyword id="KW-0025">Alternative splicing</keyword>
<keyword id="KW-0496">Mitochondrion</keyword>
<keyword id="KW-1185">Reference proteome</keyword>
<keyword id="KW-0346">Stress response</keyword>
<keyword id="KW-0809">Transit peptide</keyword>
<reference key="1">
    <citation type="journal article" date="2000" name="Nature">
        <title>Sequence and analysis of chromosome 1 of the plant Arabidopsis thaliana.</title>
        <authorList>
            <person name="Theologis A."/>
            <person name="Ecker J.R."/>
            <person name="Palm C.J."/>
            <person name="Federspiel N.A."/>
            <person name="Kaul S."/>
            <person name="White O."/>
            <person name="Alonso J."/>
            <person name="Altafi H."/>
            <person name="Araujo R."/>
            <person name="Bowman C.L."/>
            <person name="Brooks S.Y."/>
            <person name="Buehler E."/>
            <person name="Chan A."/>
            <person name="Chao Q."/>
            <person name="Chen H."/>
            <person name="Cheuk R.F."/>
            <person name="Chin C.W."/>
            <person name="Chung M.K."/>
            <person name="Conn L."/>
            <person name="Conway A.B."/>
            <person name="Conway A.R."/>
            <person name="Creasy T.H."/>
            <person name="Dewar K."/>
            <person name="Dunn P."/>
            <person name="Etgu P."/>
            <person name="Feldblyum T.V."/>
            <person name="Feng J.-D."/>
            <person name="Fong B."/>
            <person name="Fujii C.Y."/>
            <person name="Gill J.E."/>
            <person name="Goldsmith A.D."/>
            <person name="Haas B."/>
            <person name="Hansen N.F."/>
            <person name="Hughes B."/>
            <person name="Huizar L."/>
            <person name="Hunter J.L."/>
            <person name="Jenkins J."/>
            <person name="Johnson-Hopson C."/>
            <person name="Khan S."/>
            <person name="Khaykin E."/>
            <person name="Kim C.J."/>
            <person name="Koo H.L."/>
            <person name="Kremenetskaia I."/>
            <person name="Kurtz D.B."/>
            <person name="Kwan A."/>
            <person name="Lam B."/>
            <person name="Langin-Hooper S."/>
            <person name="Lee A."/>
            <person name="Lee J.M."/>
            <person name="Lenz C.A."/>
            <person name="Li J.H."/>
            <person name="Li Y.-P."/>
            <person name="Lin X."/>
            <person name="Liu S.X."/>
            <person name="Liu Z.A."/>
            <person name="Luros J.S."/>
            <person name="Maiti R."/>
            <person name="Marziali A."/>
            <person name="Militscher J."/>
            <person name="Miranda M."/>
            <person name="Nguyen M."/>
            <person name="Nierman W.C."/>
            <person name="Osborne B.I."/>
            <person name="Pai G."/>
            <person name="Peterson J."/>
            <person name="Pham P.K."/>
            <person name="Rizzo M."/>
            <person name="Rooney T."/>
            <person name="Rowley D."/>
            <person name="Sakano H."/>
            <person name="Salzberg S.L."/>
            <person name="Schwartz J.R."/>
            <person name="Shinn P."/>
            <person name="Southwick A.M."/>
            <person name="Sun H."/>
            <person name="Tallon L.J."/>
            <person name="Tambunga G."/>
            <person name="Toriumi M.J."/>
            <person name="Town C.D."/>
            <person name="Utterback T."/>
            <person name="Van Aken S."/>
            <person name="Vaysberg M."/>
            <person name="Vysotskaia V.S."/>
            <person name="Walker M."/>
            <person name="Wu D."/>
            <person name="Yu G."/>
            <person name="Fraser C.M."/>
            <person name="Venter J.C."/>
            <person name="Davis R.W."/>
        </authorList>
    </citation>
    <scope>NUCLEOTIDE SEQUENCE [LARGE SCALE GENOMIC DNA]</scope>
    <source>
        <strain>cv. Columbia</strain>
    </source>
</reference>
<reference key="2">
    <citation type="journal article" date="2017" name="Plant J.">
        <title>Araport11: a complete reannotation of the Arabidopsis thaliana reference genome.</title>
        <authorList>
            <person name="Cheng C.Y."/>
            <person name="Krishnakumar V."/>
            <person name="Chan A.P."/>
            <person name="Thibaud-Nissen F."/>
            <person name="Schobel S."/>
            <person name="Town C.D."/>
        </authorList>
    </citation>
    <scope>GENOME REANNOTATION</scope>
    <source>
        <strain>cv. Columbia</strain>
    </source>
</reference>
<reference key="3">
    <citation type="submission" date="2004-01" db="EMBL/GenBank/DDBJ databases">
        <title>Arabidopsis ORF clones.</title>
        <authorList>
            <person name="Cheuk R.F."/>
            <person name="Chen H."/>
            <person name="Kim C.J."/>
            <person name="Shinn P."/>
            <person name="Ecker J.R."/>
        </authorList>
    </citation>
    <scope>NUCLEOTIDE SEQUENCE [LARGE SCALE MRNA] (ISOFORM 1)</scope>
    <source>
        <strain>cv. Columbia</strain>
    </source>
</reference>
<name>HS26M_ARATH</name>
<protein>
    <recommendedName>
        <fullName>26.5 kDa heat shock protein, mitochondrial</fullName>
        <shortName>AtHsp26.5</shortName>
    </recommendedName>
</protein>
<proteinExistence type="evidence at transcript level"/>
<accession>Q9SSQ8</accession>
<accession>B3H5Q4</accession>
<comment type="subunit">
    <text>May form oligomeric structures.</text>
</comment>
<comment type="subcellular location">
    <subcellularLocation>
        <location evidence="4">Mitochondrion</location>
    </subcellularLocation>
</comment>
<comment type="alternative products">
    <event type="alternative splicing"/>
    <isoform>
        <id>Q9SSQ8-1</id>
        <name>1</name>
        <sequence type="displayed"/>
    </isoform>
    <isoform>
        <id>Q9SSQ8-2</id>
        <name>2</name>
        <sequence type="described" ref="VSP_038274"/>
    </isoform>
</comment>
<comment type="similarity">
    <text evidence="2">Belongs to the small heat shock protein (HSP20) family.</text>
</comment>
<organism>
    <name type="scientific">Arabidopsis thaliana</name>
    <name type="common">Mouse-ear cress</name>
    <dbReference type="NCBI Taxonomy" id="3702"/>
    <lineage>
        <taxon>Eukaryota</taxon>
        <taxon>Viridiplantae</taxon>
        <taxon>Streptophyta</taxon>
        <taxon>Embryophyta</taxon>
        <taxon>Tracheophyta</taxon>
        <taxon>Spermatophyta</taxon>
        <taxon>Magnoliopsida</taxon>
        <taxon>eudicotyledons</taxon>
        <taxon>Gunneridae</taxon>
        <taxon>Pentapetalae</taxon>
        <taxon>rosids</taxon>
        <taxon>malvids</taxon>
        <taxon>Brassicales</taxon>
        <taxon>Brassicaceae</taxon>
        <taxon>Camelineae</taxon>
        <taxon>Arabidopsis</taxon>
    </lineage>
</organism>